<evidence type="ECO:0000250" key="1"/>
<evidence type="ECO:0000256" key="2">
    <source>
        <dbReference type="SAM" id="MobiDB-lite"/>
    </source>
</evidence>
<evidence type="ECO:0000305" key="3"/>
<comment type="function">
    <text evidence="1">May play a role in mdm2-dependent p53/TP53 homeostasis in unstressed cells. Inhibits autoubiquitination of mdm2, thereby enhancing mdm2 stability. This promotes mdm2-mediated ubiquitination of p53/TP53 and its subsequent degradation (By similarity).</text>
</comment>
<comment type="similarity">
    <text evidence="3">Belongs to the MTBP family.</text>
</comment>
<comment type="sequence caution" evidence="3">
    <conflict type="erroneous initiation">
        <sequence resource="EMBL-CDS" id="AAI22087"/>
    </conflict>
</comment>
<keyword id="KW-0131">Cell cycle</keyword>
<keyword id="KW-0338">Growth arrest</keyword>
<keyword id="KW-1185">Reference proteome</keyword>
<keyword id="KW-0833">Ubl conjugation pathway</keyword>
<gene>
    <name type="primary">mtbp</name>
</gene>
<sequence length="867" mass="97059">MERFVLCIHWERRAESGAEQHRVPQGLAYAQDIYTQLKEYSTKYTSTFPACSLTGNPGTRKWFFALQSLYGSFQFCSSDWDDLCPAVTTEDNEEPVQTALDECLEALQFPDGEDDNSRDSISQTNLFEEAAELLHQLSDKLPAPGRALVDVLLFTPEAPKLKDCLSAIGAIKHLKEWHSAKITIVSKDCKGWQKIAKFLSANVVESACPKELIDSHELWRGNIEISERKFTSEVEFPEFCLRSVSDDKFPYFEHNGDDKNKAVLLPEVFHYYGTSLEYVQMVALSEIPSYFVSDSVFELSITRNALQGKSKLMLDQLCSLTDKVGAIFMLSCNVCSLPNPPALQRSSKKWREYMSRKPKDIKVPGVELKGEYCSYYFLIQGKGSGFCKATLLHSASQISGAASLVLLHQRLNNYQPGNMAEGTSEILDSVPHFRGEQIAVRERILARAQALAVNEYLKRHEALPHPSVSHVNNLRTLLAVTRERVIGDCESRLDGVSYKNLQNITVSTPTVSESEAMISNPADWPERNVLQNLENFEKVKQRLRASILSSSAEQLLGRKDGLKEGMTLLDAKELLKYFTPQGIAVGELQPLQVQRGDNAFLLTPKLTPKKLKGLPFEKAAECHYHGLEYCLDNRKALDRDVAFSELQSRLIRYETQTTCTRECCPVPFALSPLPSPAVLSEPGSVPDGESIQTELRGEPLLLKRRSRDLDGLYASKRLAKSGSSDSLVSLASEGSGHQPPTRATRLRPERAASSTSAVQPPSARVQMAPSVPAQSKQSTHPDLEQKESRSQKHNRMLKEVVSKTLQKYGIGVEHPCYAACNQRLFDISKFFLKDLKTSRGLLDEMKKAASNNAKQVIQWELDKLKKK</sequence>
<protein>
    <recommendedName>
        <fullName>Mdm2-binding protein</fullName>
    </recommendedName>
</protein>
<dbReference type="EMBL" id="BC122086">
    <property type="protein sequence ID" value="AAI22087.1"/>
    <property type="status" value="ALT_INIT"/>
    <property type="molecule type" value="mRNA"/>
</dbReference>
<dbReference type="EMBL" id="BC155673">
    <property type="protein sequence ID" value="AAI55674.1"/>
    <property type="molecule type" value="mRNA"/>
</dbReference>
<dbReference type="RefSeq" id="NP_001107690.1">
    <property type="nucleotide sequence ID" value="NM_001114218.1"/>
</dbReference>
<dbReference type="FunCoup" id="Q0P4G8">
    <property type="interactions" value="817"/>
</dbReference>
<dbReference type="STRING" id="8364.ENSXETP00000005693"/>
<dbReference type="PaxDb" id="8364-ENSXETP00000006782"/>
<dbReference type="GeneID" id="779505"/>
<dbReference type="KEGG" id="xtr:779505"/>
<dbReference type="AGR" id="Xenbase:XB-GENE-990920"/>
<dbReference type="CTD" id="27085"/>
<dbReference type="Xenbase" id="XB-GENE-990920">
    <property type="gene designation" value="mtbp"/>
</dbReference>
<dbReference type="eggNOG" id="ENOG502RGBH">
    <property type="taxonomic scope" value="Eukaryota"/>
</dbReference>
<dbReference type="InParanoid" id="Q0P4G8"/>
<dbReference type="OMA" id="HFYGEQI"/>
<dbReference type="OrthoDB" id="8633268at2759"/>
<dbReference type="Proteomes" id="UP000008143">
    <property type="component" value="Chromosome 6"/>
</dbReference>
<dbReference type="Bgee" id="ENSXETG00000003129">
    <property type="expression patterns" value="Expressed in egg cell and 13 other cell types or tissues"/>
</dbReference>
<dbReference type="GO" id="GO:0051726">
    <property type="term" value="P:regulation of cell cycle"/>
    <property type="evidence" value="ECO:0007669"/>
    <property type="project" value="UniProtKB-KW"/>
</dbReference>
<dbReference type="GO" id="GO:0031396">
    <property type="term" value="P:regulation of protein ubiquitination"/>
    <property type="evidence" value="ECO:0007669"/>
    <property type="project" value="InterPro"/>
</dbReference>
<dbReference type="InterPro" id="IPR039061">
    <property type="entry name" value="MTBP"/>
</dbReference>
<dbReference type="InterPro" id="IPR029418">
    <property type="entry name" value="MTBP_C"/>
</dbReference>
<dbReference type="InterPro" id="IPR029420">
    <property type="entry name" value="MTBP_central"/>
</dbReference>
<dbReference type="InterPro" id="IPR029421">
    <property type="entry name" value="MTBP_N"/>
</dbReference>
<dbReference type="PANTHER" id="PTHR14382">
    <property type="entry name" value="MDM2-BINDING PROTEIN"/>
    <property type="match status" value="1"/>
</dbReference>
<dbReference type="PANTHER" id="PTHR14382:SF1">
    <property type="entry name" value="MDM2-BINDING PROTEIN"/>
    <property type="match status" value="1"/>
</dbReference>
<dbReference type="Pfam" id="PF14920">
    <property type="entry name" value="MTBP_C"/>
    <property type="match status" value="1"/>
</dbReference>
<dbReference type="Pfam" id="PF14919">
    <property type="entry name" value="MTBP_mid"/>
    <property type="match status" value="1"/>
</dbReference>
<dbReference type="Pfam" id="PF14918">
    <property type="entry name" value="MTBP_N"/>
    <property type="match status" value="1"/>
</dbReference>
<reference key="1">
    <citation type="submission" date="2007-12" db="EMBL/GenBank/DDBJ databases">
        <authorList>
            <consortium name="NIH - Xenopus Gene Collection (XGC) project"/>
        </authorList>
    </citation>
    <scope>NUCLEOTIDE SEQUENCE [LARGE SCALE MRNA]</scope>
    <source>
        <strain>N6</strain>
        <tissue>Oviduct</tissue>
        <tissue>Testis</tissue>
    </source>
</reference>
<organism>
    <name type="scientific">Xenopus tropicalis</name>
    <name type="common">Western clawed frog</name>
    <name type="synonym">Silurana tropicalis</name>
    <dbReference type="NCBI Taxonomy" id="8364"/>
    <lineage>
        <taxon>Eukaryota</taxon>
        <taxon>Metazoa</taxon>
        <taxon>Chordata</taxon>
        <taxon>Craniata</taxon>
        <taxon>Vertebrata</taxon>
        <taxon>Euteleostomi</taxon>
        <taxon>Amphibia</taxon>
        <taxon>Batrachia</taxon>
        <taxon>Anura</taxon>
        <taxon>Pipoidea</taxon>
        <taxon>Pipidae</taxon>
        <taxon>Xenopodinae</taxon>
        <taxon>Xenopus</taxon>
        <taxon>Silurana</taxon>
    </lineage>
</organism>
<feature type="chain" id="PRO_0000323748" description="Mdm2-binding protein">
    <location>
        <begin position="1"/>
        <end position="867"/>
    </location>
</feature>
<feature type="region of interest" description="Disordered" evidence="2">
    <location>
        <begin position="679"/>
        <end position="699"/>
    </location>
</feature>
<feature type="region of interest" description="Disordered" evidence="2">
    <location>
        <begin position="724"/>
        <end position="793"/>
    </location>
</feature>
<feature type="compositionally biased region" description="Low complexity" evidence="2">
    <location>
        <begin position="724"/>
        <end position="735"/>
    </location>
</feature>
<feature type="compositionally biased region" description="Basic and acidic residues" evidence="2">
    <location>
        <begin position="779"/>
        <end position="793"/>
    </location>
</feature>
<name>MTBP_XENTR</name>
<proteinExistence type="evidence at transcript level"/>
<accession>Q0P4G8</accession>
<accession>A9JRI5</accession>